<name>TRAP_ABMVW</name>
<proteinExistence type="inferred from homology"/>
<sequence>MRSSSPSQPPSIKKAHRQAKRRAIRRRRIDLQCGCSIYFHIDCTGHGFTHRGIHHCTSGGEWRVYLGDSKSPVFQDIQSRGPAIHQNEDIPCTNTVQPQPEESVASPQSLPELPSLDDFDDSFWVNLFK</sequence>
<accession>P21944</accession>
<comment type="function">
    <text evidence="1">Strong activator of the late viral genes promoters. Enhances the expression of the capsid protein and nuclear shuttle protein. Acts as a suppressor of RNA-mediated gene silencing, also known as post-transcriptional gene silencing (PTGS), a mechanism of plant viral defense that limits the accumulation of viral RNAs. Suppresses the host RNA silencing by inhibiting adenosine kinase 2 (ADK2), a kinase involved in a general methylation pathway. Also suppresses the host basal defense by interacting with and inhibiting SNF1 kinase, a key regulator of cell metabolism implicated in innate antiviral defense. Determines pathogenicity (By similarity).</text>
</comment>
<comment type="subunit">
    <text evidence="1">Monomer. Homodimer. Homooligomer. Self-interaction correlates with nuclear localization and efficient activation of transcription. Monomers suppress local silencing by interacting with and inactivating host adenosine kinase 2 (ADK2) in the cytoplasm. Interacts with and inhibits host SNF1 kinase. Binds to ssDNA (By similarity).</text>
</comment>
<comment type="subcellular location">
    <subcellularLocation>
        <location evidence="1">Host nucleus</location>
    </subcellularLocation>
    <subcellularLocation>
        <location evidence="1">Host cytoplasm</location>
    </subcellularLocation>
    <text evidence="1">The phosphorylated form appears to accumulate almost exclusively in the nucleus, whereas the non-phosphorylated form is found in both nucleus and cytoplasm.</text>
</comment>
<comment type="domain">
    <text evidence="1">The zinc finger and the transactivation region are involved in PTGS suppression.</text>
</comment>
<comment type="PTM">
    <text evidence="1">Phosphorylated.</text>
</comment>
<comment type="similarity">
    <text evidence="3">Belongs to the geminiviridae transcriptional activator protein family.</text>
</comment>
<gene>
    <name type="ORF">AC2</name>
    <name type="ORF">AL2</name>
</gene>
<feature type="chain" id="PRO_0000222222" description="Transcriptional activator protein">
    <location>
        <begin position="1"/>
        <end position="129"/>
    </location>
</feature>
<feature type="zinc finger region" evidence="1">
    <location>
        <begin position="33"/>
        <end position="50"/>
    </location>
</feature>
<feature type="region of interest" description="Disordered" evidence="2">
    <location>
        <begin position="1"/>
        <end position="21"/>
    </location>
</feature>
<feature type="region of interest" description="Disordered" evidence="2">
    <location>
        <begin position="84"/>
        <end position="114"/>
    </location>
</feature>
<feature type="region of interest" description="Transactivation" evidence="1">
    <location>
        <begin position="115"/>
        <end position="129"/>
    </location>
</feature>
<feature type="short sequence motif" description="Nuclear localization signal" evidence="1">
    <location>
        <begin position="13"/>
        <end position="28"/>
    </location>
</feature>
<feature type="compositionally biased region" description="Low complexity" evidence="2">
    <location>
        <begin position="1"/>
        <end position="12"/>
    </location>
</feature>
<feature type="compositionally biased region" description="Polar residues" evidence="2">
    <location>
        <begin position="92"/>
        <end position="109"/>
    </location>
</feature>
<reference key="1">
    <citation type="journal article" date="1990" name="Virology">
        <title>The nucleotide sequence of abutilon mosaic virus reveals prokaryotic as well as eukaryotic features.</title>
        <authorList>
            <person name="Frischmuth T."/>
            <person name="Zimmat G."/>
            <person name="Jeske H."/>
        </authorList>
    </citation>
    <scope>NUCLEOTIDE SEQUENCE [GENOMIC DNA]</scope>
</reference>
<reference key="2">
    <citation type="submission" date="2003-11" db="EMBL/GenBank/DDBJ databases">
        <authorList>
            <person name="Jeske H."/>
        </authorList>
    </citation>
    <scope>SEQUENCE REVISION</scope>
</reference>
<protein>
    <recommendedName>
        <fullName>Transcriptional activator protein</fullName>
        <shortName>TrAP</shortName>
    </recommendedName>
    <alternativeName>
        <fullName>Protein AC2</fullName>
    </alternativeName>
    <alternativeName>
        <fullName>Protein AL2</fullName>
    </alternativeName>
</protein>
<organismHost>
    <name type="scientific">Abutilon</name>
    <dbReference type="NCBI Taxonomy" id="3630"/>
</organismHost>
<organismHost>
    <name type="scientific">Gossypium hirsutum</name>
    <name type="common">Upland cotton</name>
    <name type="synonym">Gossypium mexicanum</name>
    <dbReference type="NCBI Taxonomy" id="3635"/>
</organismHost>
<organismHost>
    <name type="scientific">Hibiscus</name>
    <dbReference type="NCBI Taxonomy" id="47605"/>
</organismHost>
<organismHost>
    <name type="scientific">Malva</name>
    <dbReference type="NCBI Taxonomy" id="96479"/>
</organismHost>
<organismHost>
    <name type="scientific">Phaseolus vulgaris</name>
    <name type="common">Kidney bean</name>
    <name type="synonym">French bean</name>
    <dbReference type="NCBI Taxonomy" id="3885"/>
</organismHost>
<organismHost>
    <name type="scientific">Sida</name>
    <dbReference type="NCBI Taxonomy" id="108335"/>
</organismHost>
<organism>
    <name type="scientific">Abutilon mosaic virus (isolate West India)</name>
    <name type="common">AbMV</name>
    <dbReference type="NCBI Taxonomy" id="10816"/>
    <lineage>
        <taxon>Viruses</taxon>
        <taxon>Monodnaviria</taxon>
        <taxon>Shotokuvirae</taxon>
        <taxon>Cressdnaviricota</taxon>
        <taxon>Repensiviricetes</taxon>
        <taxon>Geplafuvirales</taxon>
        <taxon>Geminiviridae</taxon>
        <taxon>Begomovirus</taxon>
        <taxon>Begomovirus bauri</taxon>
    </lineage>
</organism>
<keyword id="KW-0010">Activator</keyword>
<keyword id="KW-0238">DNA-binding</keyword>
<keyword id="KW-1035">Host cytoplasm</keyword>
<keyword id="KW-1048">Host nucleus</keyword>
<keyword id="KW-0945">Host-virus interaction</keyword>
<keyword id="KW-1090">Inhibition of host innate immune response by virus</keyword>
<keyword id="KW-0479">Metal-binding</keyword>
<keyword id="KW-0597">Phosphoprotein</keyword>
<keyword id="KW-1185">Reference proteome</keyword>
<keyword id="KW-0941">Suppressor of RNA silencing</keyword>
<keyword id="KW-0899">Viral immunoevasion</keyword>
<keyword id="KW-0862">Zinc</keyword>
<keyword id="KW-0863">Zinc-finger</keyword>
<dbReference type="EMBL" id="X15983">
    <property type="protein sequence ID" value="CAA34112.2"/>
    <property type="molecule type" value="Genomic_DNA"/>
</dbReference>
<dbReference type="PIR" id="D36214">
    <property type="entry name" value="QQCVW4"/>
</dbReference>
<dbReference type="KEGG" id="vg:956372"/>
<dbReference type="Proteomes" id="UP000006885">
    <property type="component" value="Genome"/>
</dbReference>
<dbReference type="GO" id="GO:0030430">
    <property type="term" value="C:host cell cytoplasm"/>
    <property type="evidence" value="ECO:0007669"/>
    <property type="project" value="UniProtKB-SubCell"/>
</dbReference>
<dbReference type="GO" id="GO:0042025">
    <property type="term" value="C:host cell nucleus"/>
    <property type="evidence" value="ECO:0007669"/>
    <property type="project" value="UniProtKB-SubCell"/>
</dbReference>
<dbReference type="GO" id="GO:0019028">
    <property type="term" value="C:viral capsid"/>
    <property type="evidence" value="ECO:0007669"/>
    <property type="project" value="InterPro"/>
</dbReference>
<dbReference type="GO" id="GO:0003677">
    <property type="term" value="F:DNA binding"/>
    <property type="evidence" value="ECO:0007669"/>
    <property type="project" value="UniProtKB-KW"/>
</dbReference>
<dbReference type="GO" id="GO:0005198">
    <property type="term" value="F:structural molecule activity"/>
    <property type="evidence" value="ECO:0007669"/>
    <property type="project" value="InterPro"/>
</dbReference>
<dbReference type="GO" id="GO:0008270">
    <property type="term" value="F:zinc ion binding"/>
    <property type="evidence" value="ECO:0007669"/>
    <property type="project" value="UniProtKB-KW"/>
</dbReference>
<dbReference type="GO" id="GO:0052170">
    <property type="term" value="P:symbiont-mediated suppression of host innate immune response"/>
    <property type="evidence" value="ECO:0007669"/>
    <property type="project" value="UniProtKB-KW"/>
</dbReference>
<dbReference type="InterPro" id="IPR000942">
    <property type="entry name" value="Gemini_AL2"/>
</dbReference>
<dbReference type="Pfam" id="PF01440">
    <property type="entry name" value="Gemini_AL2"/>
    <property type="match status" value="1"/>
</dbReference>
<dbReference type="PRINTS" id="PR00230">
    <property type="entry name" value="GEMCOATAL2"/>
</dbReference>
<evidence type="ECO:0000250" key="1"/>
<evidence type="ECO:0000256" key="2">
    <source>
        <dbReference type="SAM" id="MobiDB-lite"/>
    </source>
</evidence>
<evidence type="ECO:0000305" key="3"/>